<name>SWET4_ORYSJ</name>
<dbReference type="EMBL" id="AP005532">
    <property type="protein sequence ID" value="BAD23335.1"/>
    <property type="molecule type" value="Genomic_DNA"/>
</dbReference>
<dbReference type="EMBL" id="AP008208">
    <property type="protein sequence ID" value="BAF08535.1"/>
    <property type="molecule type" value="Genomic_DNA"/>
</dbReference>
<dbReference type="EMBL" id="AP014958">
    <property type="protein sequence ID" value="BAS78252.1"/>
    <property type="molecule type" value="Genomic_DNA"/>
</dbReference>
<dbReference type="EMBL" id="CM000139">
    <property type="protein sequence ID" value="EAZ22699.1"/>
    <property type="molecule type" value="Genomic_DNA"/>
</dbReference>
<dbReference type="EMBL" id="AK071676">
    <property type="protein sequence ID" value="BAG92621.1"/>
    <property type="molecule type" value="mRNA"/>
</dbReference>
<dbReference type="EMBL" id="AK100174">
    <property type="protein sequence ID" value="BAG94476.1"/>
    <property type="molecule type" value="mRNA"/>
</dbReference>
<dbReference type="EMBL" id="AK104411">
    <property type="protein sequence ID" value="BAG96658.1"/>
    <property type="molecule type" value="mRNA"/>
</dbReference>
<dbReference type="EMBL" id="AK104467">
    <property type="protein sequence ID" value="BAG96708.1"/>
    <property type="molecule type" value="mRNA"/>
</dbReference>
<dbReference type="RefSeq" id="XP_015626955.1">
    <property type="nucleotide sequence ID" value="XM_015771469.1"/>
</dbReference>
<dbReference type="SMR" id="Q6K4V2"/>
<dbReference type="FunCoup" id="Q6K4V2">
    <property type="interactions" value="354"/>
</dbReference>
<dbReference type="STRING" id="39947.Q6K4V2"/>
<dbReference type="GlyCosmos" id="Q6K4V2">
    <property type="glycosylation" value="1 site, No reported glycans"/>
</dbReference>
<dbReference type="PaxDb" id="39947-Q6K4V2"/>
<dbReference type="EnsemblPlants" id="Os02t0301100-01">
    <property type="protein sequence ID" value="Os02t0301100-01"/>
    <property type="gene ID" value="Os02g0301100"/>
</dbReference>
<dbReference type="Gramene" id="Os02t0301100-01">
    <property type="protein sequence ID" value="Os02t0301100-01"/>
    <property type="gene ID" value="Os02g0301100"/>
</dbReference>
<dbReference type="KEGG" id="dosa:Os02g0301100"/>
<dbReference type="eggNOG" id="KOG1623">
    <property type="taxonomic scope" value="Eukaryota"/>
</dbReference>
<dbReference type="HOGENOM" id="CLU_048643_1_0_1"/>
<dbReference type="InParanoid" id="Q6K4V2"/>
<dbReference type="OMA" id="MIFCNCY"/>
<dbReference type="OrthoDB" id="409725at2759"/>
<dbReference type="Proteomes" id="UP000000763">
    <property type="component" value="Chromosome 2"/>
</dbReference>
<dbReference type="Proteomes" id="UP000007752">
    <property type="component" value="Chromosome 2"/>
</dbReference>
<dbReference type="Proteomes" id="UP000059680">
    <property type="component" value="Chromosome 2"/>
</dbReference>
<dbReference type="GO" id="GO:0016020">
    <property type="term" value="C:membrane"/>
    <property type="evidence" value="ECO:0000318"/>
    <property type="project" value="GO_Central"/>
</dbReference>
<dbReference type="GO" id="GO:0005886">
    <property type="term" value="C:plasma membrane"/>
    <property type="evidence" value="ECO:0000250"/>
    <property type="project" value="UniProtKB"/>
</dbReference>
<dbReference type="GO" id="GO:0051119">
    <property type="term" value="F:sugar transmembrane transporter activity"/>
    <property type="evidence" value="ECO:0000250"/>
    <property type="project" value="UniProtKB"/>
</dbReference>
<dbReference type="GO" id="GO:0008643">
    <property type="term" value="P:carbohydrate transport"/>
    <property type="evidence" value="ECO:0000318"/>
    <property type="project" value="GO_Central"/>
</dbReference>
<dbReference type="FunFam" id="1.20.1280.290:FF:000001">
    <property type="entry name" value="Bidirectional sugar transporter SWEET"/>
    <property type="match status" value="1"/>
</dbReference>
<dbReference type="FunFam" id="1.20.1280.290:FF:000002">
    <property type="entry name" value="Bidirectional sugar transporter SWEET"/>
    <property type="match status" value="1"/>
</dbReference>
<dbReference type="Gene3D" id="1.20.1280.290">
    <property type="match status" value="2"/>
</dbReference>
<dbReference type="InterPro" id="IPR047664">
    <property type="entry name" value="SWEET"/>
</dbReference>
<dbReference type="InterPro" id="IPR004316">
    <property type="entry name" value="SWEET_rpt"/>
</dbReference>
<dbReference type="PANTHER" id="PTHR10791:SF130">
    <property type="entry name" value="BIDIRECTIONAL SUGAR TRANSPORTER SWEET6-RELATED"/>
    <property type="match status" value="1"/>
</dbReference>
<dbReference type="PANTHER" id="PTHR10791">
    <property type="entry name" value="RAG1-ACTIVATING PROTEIN 1"/>
    <property type="match status" value="1"/>
</dbReference>
<dbReference type="Pfam" id="PF03083">
    <property type="entry name" value="MtN3_slv"/>
    <property type="match status" value="2"/>
</dbReference>
<organism>
    <name type="scientific">Oryza sativa subsp. japonica</name>
    <name type="common">Rice</name>
    <dbReference type="NCBI Taxonomy" id="39947"/>
    <lineage>
        <taxon>Eukaryota</taxon>
        <taxon>Viridiplantae</taxon>
        <taxon>Streptophyta</taxon>
        <taxon>Embryophyta</taxon>
        <taxon>Tracheophyta</taxon>
        <taxon>Spermatophyta</taxon>
        <taxon>Magnoliopsida</taxon>
        <taxon>Liliopsida</taxon>
        <taxon>Poales</taxon>
        <taxon>Poaceae</taxon>
        <taxon>BOP clade</taxon>
        <taxon>Oryzoideae</taxon>
        <taxon>Oryzeae</taxon>
        <taxon>Oryzinae</taxon>
        <taxon>Oryza</taxon>
        <taxon>Oryza sativa</taxon>
    </lineage>
</organism>
<protein>
    <recommendedName>
        <fullName>Bidirectional sugar transporter SWEET4</fullName>
        <shortName>OsSWEET4</shortName>
    </recommendedName>
</protein>
<keyword id="KW-1003">Cell membrane</keyword>
<keyword id="KW-0325">Glycoprotein</keyword>
<keyword id="KW-0472">Membrane</keyword>
<keyword id="KW-1185">Reference proteome</keyword>
<keyword id="KW-0677">Repeat</keyword>
<keyword id="KW-0762">Sugar transport</keyword>
<keyword id="KW-0812">Transmembrane</keyword>
<keyword id="KW-1133">Transmembrane helix</keyword>
<keyword id="KW-0813">Transport</keyword>
<comment type="function">
    <text evidence="1">Mediates both low-affinity uptake and efflux of sugar across the plasma membrane.</text>
</comment>
<comment type="subunit">
    <text evidence="1">Forms homooligomers and/or heterooligomers.</text>
</comment>
<comment type="subcellular location">
    <subcellularLocation>
        <location evidence="1">Cell membrane</location>
        <topology evidence="1">Multi-pass membrane protein</topology>
    </subcellularLocation>
</comment>
<comment type="similarity">
    <text evidence="3">Belongs to the SWEET sugar transporter family.</text>
</comment>
<gene>
    <name type="primary">SWEET4</name>
    <name type="ordered locus">Os02g0301100</name>
    <name type="ordered locus">LOC_Os02g19820</name>
    <name type="ORF">OsJ_06370</name>
    <name type="ORF">OSJNBa0010K08.10</name>
</gene>
<sequence length="259" mass="28046">MVSPDTIRTAIGVVGNGTALVLFLSPVPTFIRIWKKGSVEQYSAVPYVATLLNCMMWVLYGLPAVHPHSMLVITINGTGMAIELTYIALFLAFSLGAVRRRVLLLLAAEVAFVAAVAALVLNLAHTHERRSMIVGILCVLFGTGMYAAPLSVMKMVIQTKSVEYMPLFLSLASLVNGICWTAYALIRFDLYITIPNGLGVMFAVAQLILYAIYYKSTQQIIEARKRKEADHVAMTDVVVDSAKNNPSSGAAAAAANGRY</sequence>
<accession>Q6K4V2</accession>
<accession>A0A0P0VHY4</accession>
<evidence type="ECO:0000250" key="1">
    <source>
        <dbReference type="UniProtKB" id="Q8L9J7"/>
    </source>
</evidence>
<evidence type="ECO:0000255" key="2"/>
<evidence type="ECO:0000305" key="3"/>
<reference key="1">
    <citation type="journal article" date="2005" name="Nature">
        <title>The map-based sequence of the rice genome.</title>
        <authorList>
            <consortium name="International rice genome sequencing project (IRGSP)"/>
        </authorList>
    </citation>
    <scope>NUCLEOTIDE SEQUENCE [LARGE SCALE GENOMIC DNA]</scope>
    <source>
        <strain>cv. Nipponbare</strain>
    </source>
</reference>
<reference key="2">
    <citation type="journal article" date="2008" name="Nucleic Acids Res.">
        <title>The rice annotation project database (RAP-DB): 2008 update.</title>
        <authorList>
            <consortium name="The rice annotation project (RAP)"/>
        </authorList>
    </citation>
    <scope>GENOME REANNOTATION</scope>
    <source>
        <strain>cv. Nipponbare</strain>
    </source>
</reference>
<reference key="3">
    <citation type="journal article" date="2013" name="Rice">
        <title>Improvement of the Oryza sativa Nipponbare reference genome using next generation sequence and optical map data.</title>
        <authorList>
            <person name="Kawahara Y."/>
            <person name="de la Bastide M."/>
            <person name="Hamilton J.P."/>
            <person name="Kanamori H."/>
            <person name="McCombie W.R."/>
            <person name="Ouyang S."/>
            <person name="Schwartz D.C."/>
            <person name="Tanaka T."/>
            <person name="Wu J."/>
            <person name="Zhou S."/>
            <person name="Childs K.L."/>
            <person name="Davidson R.M."/>
            <person name="Lin H."/>
            <person name="Quesada-Ocampo L."/>
            <person name="Vaillancourt B."/>
            <person name="Sakai H."/>
            <person name="Lee S.S."/>
            <person name="Kim J."/>
            <person name="Numa H."/>
            <person name="Itoh T."/>
            <person name="Buell C.R."/>
            <person name="Matsumoto T."/>
        </authorList>
    </citation>
    <scope>GENOME REANNOTATION</scope>
    <source>
        <strain>cv. Nipponbare</strain>
    </source>
</reference>
<reference key="4">
    <citation type="journal article" date="2005" name="PLoS Biol.">
        <title>The genomes of Oryza sativa: a history of duplications.</title>
        <authorList>
            <person name="Yu J."/>
            <person name="Wang J."/>
            <person name="Lin W."/>
            <person name="Li S."/>
            <person name="Li H."/>
            <person name="Zhou J."/>
            <person name="Ni P."/>
            <person name="Dong W."/>
            <person name="Hu S."/>
            <person name="Zeng C."/>
            <person name="Zhang J."/>
            <person name="Zhang Y."/>
            <person name="Li R."/>
            <person name="Xu Z."/>
            <person name="Li S."/>
            <person name="Li X."/>
            <person name="Zheng H."/>
            <person name="Cong L."/>
            <person name="Lin L."/>
            <person name="Yin J."/>
            <person name="Geng J."/>
            <person name="Li G."/>
            <person name="Shi J."/>
            <person name="Liu J."/>
            <person name="Lv H."/>
            <person name="Li J."/>
            <person name="Wang J."/>
            <person name="Deng Y."/>
            <person name="Ran L."/>
            <person name="Shi X."/>
            <person name="Wang X."/>
            <person name="Wu Q."/>
            <person name="Li C."/>
            <person name="Ren X."/>
            <person name="Wang J."/>
            <person name="Wang X."/>
            <person name="Li D."/>
            <person name="Liu D."/>
            <person name="Zhang X."/>
            <person name="Ji Z."/>
            <person name="Zhao W."/>
            <person name="Sun Y."/>
            <person name="Zhang Z."/>
            <person name="Bao J."/>
            <person name="Han Y."/>
            <person name="Dong L."/>
            <person name="Ji J."/>
            <person name="Chen P."/>
            <person name="Wu S."/>
            <person name="Liu J."/>
            <person name="Xiao Y."/>
            <person name="Bu D."/>
            <person name="Tan J."/>
            <person name="Yang L."/>
            <person name="Ye C."/>
            <person name="Zhang J."/>
            <person name="Xu J."/>
            <person name="Zhou Y."/>
            <person name="Yu Y."/>
            <person name="Zhang B."/>
            <person name="Zhuang S."/>
            <person name="Wei H."/>
            <person name="Liu B."/>
            <person name="Lei M."/>
            <person name="Yu H."/>
            <person name="Li Y."/>
            <person name="Xu H."/>
            <person name="Wei S."/>
            <person name="He X."/>
            <person name="Fang L."/>
            <person name="Zhang Z."/>
            <person name="Zhang Y."/>
            <person name="Huang X."/>
            <person name="Su Z."/>
            <person name="Tong W."/>
            <person name="Li J."/>
            <person name="Tong Z."/>
            <person name="Li S."/>
            <person name="Ye J."/>
            <person name="Wang L."/>
            <person name="Fang L."/>
            <person name="Lei T."/>
            <person name="Chen C.-S."/>
            <person name="Chen H.-C."/>
            <person name="Xu Z."/>
            <person name="Li H."/>
            <person name="Huang H."/>
            <person name="Zhang F."/>
            <person name="Xu H."/>
            <person name="Li N."/>
            <person name="Zhao C."/>
            <person name="Li S."/>
            <person name="Dong L."/>
            <person name="Huang Y."/>
            <person name="Li L."/>
            <person name="Xi Y."/>
            <person name="Qi Q."/>
            <person name="Li W."/>
            <person name="Zhang B."/>
            <person name="Hu W."/>
            <person name="Zhang Y."/>
            <person name="Tian X."/>
            <person name="Jiao Y."/>
            <person name="Liang X."/>
            <person name="Jin J."/>
            <person name="Gao L."/>
            <person name="Zheng W."/>
            <person name="Hao B."/>
            <person name="Liu S.-M."/>
            <person name="Wang W."/>
            <person name="Yuan L."/>
            <person name="Cao M."/>
            <person name="McDermott J."/>
            <person name="Samudrala R."/>
            <person name="Wang J."/>
            <person name="Wong G.K.-S."/>
            <person name="Yang H."/>
        </authorList>
    </citation>
    <scope>NUCLEOTIDE SEQUENCE [LARGE SCALE GENOMIC DNA]</scope>
    <source>
        <strain>cv. Nipponbare</strain>
    </source>
</reference>
<reference key="5">
    <citation type="journal article" date="2003" name="Science">
        <title>Collection, mapping, and annotation of over 28,000 cDNA clones from japonica rice.</title>
        <authorList>
            <consortium name="The rice full-length cDNA consortium"/>
        </authorList>
    </citation>
    <scope>NUCLEOTIDE SEQUENCE [LARGE SCALE MRNA]</scope>
    <source>
        <strain>cv. Nipponbare</strain>
    </source>
</reference>
<reference key="6">
    <citation type="journal article" date="2010" name="Nature">
        <title>Sugar transporters for intercellular exchange and nutrition of pathogens.</title>
        <authorList>
            <person name="Chen L.-Q."/>
            <person name="Hou B.-H."/>
            <person name="Lalonde S."/>
            <person name="Takanaga H."/>
            <person name="Hartung M.L."/>
            <person name="Qu X.-Q."/>
            <person name="Guo W.-J."/>
            <person name="Kim J.-G."/>
            <person name="Underwood W."/>
            <person name="Chaudhuri B."/>
            <person name="Chermak D."/>
            <person name="Antony G."/>
            <person name="White F.F."/>
            <person name="Somerville S.C."/>
            <person name="Mudgett M.B."/>
            <person name="Frommer W.B."/>
        </authorList>
    </citation>
    <scope>GENE FAMILY</scope>
    <scope>NOMENCLATURE</scope>
</reference>
<proteinExistence type="evidence at transcript level"/>
<feature type="chain" id="PRO_0000404124" description="Bidirectional sugar transporter SWEET4">
    <location>
        <begin position="1"/>
        <end position="259"/>
    </location>
</feature>
<feature type="topological domain" description="Extracellular" evidence="2">
    <location>
        <begin position="1"/>
        <end position="10"/>
    </location>
</feature>
<feature type="transmembrane region" description="Helical; Name=1" evidence="2">
    <location>
        <begin position="11"/>
        <end position="31"/>
    </location>
</feature>
<feature type="topological domain" description="Cytoplasmic" evidence="2">
    <location>
        <begin position="32"/>
        <end position="44"/>
    </location>
</feature>
<feature type="transmembrane region" description="Helical; Name=2" evidence="2">
    <location>
        <begin position="45"/>
        <end position="65"/>
    </location>
</feature>
<feature type="topological domain" description="Extracellular" evidence="2">
    <location>
        <begin position="66"/>
        <end position="77"/>
    </location>
</feature>
<feature type="transmembrane region" description="Helical; Name=3" evidence="2">
    <location>
        <begin position="78"/>
        <end position="98"/>
    </location>
</feature>
<feature type="topological domain" description="Cytoplasmic" evidence="2">
    <location>
        <begin position="99"/>
        <end position="101"/>
    </location>
</feature>
<feature type="transmembrane region" description="Helical; Name=4" evidence="2">
    <location>
        <begin position="102"/>
        <end position="122"/>
    </location>
</feature>
<feature type="topological domain" description="Extracellular" evidence="2">
    <location>
        <begin position="123"/>
        <end position="131"/>
    </location>
</feature>
<feature type="transmembrane region" description="Helical; Name=5" evidence="2">
    <location>
        <begin position="132"/>
        <end position="152"/>
    </location>
</feature>
<feature type="topological domain" description="Cytoplasmic" evidence="2">
    <location>
        <begin position="153"/>
        <end position="165"/>
    </location>
</feature>
<feature type="transmembrane region" description="Helical; Name=6" evidence="2">
    <location>
        <begin position="166"/>
        <end position="186"/>
    </location>
</feature>
<feature type="topological domain" description="Extracellular" evidence="2">
    <location>
        <begin position="187"/>
        <end position="191"/>
    </location>
</feature>
<feature type="transmembrane region" description="Helical; Name=7" evidence="2">
    <location>
        <begin position="192"/>
        <end position="212"/>
    </location>
</feature>
<feature type="topological domain" description="Cytoplasmic" evidence="2">
    <location>
        <begin position="213"/>
        <end position="259"/>
    </location>
</feature>
<feature type="domain" description="MtN3/slv 1">
    <location>
        <begin position="10"/>
        <end position="94"/>
    </location>
</feature>
<feature type="domain" description="MtN3/slv 2">
    <location>
        <begin position="133"/>
        <end position="217"/>
    </location>
</feature>
<feature type="glycosylation site" description="N-linked (GlcNAc...) asparagine" evidence="2">
    <location>
        <position position="76"/>
    </location>
</feature>